<dbReference type="EMBL" id="CP000555">
    <property type="protein sequence ID" value="ABM93037.1"/>
    <property type="molecule type" value="Genomic_DNA"/>
</dbReference>
<dbReference type="RefSeq" id="WP_011827676.1">
    <property type="nucleotide sequence ID" value="NC_008825.1"/>
</dbReference>
<dbReference type="SMR" id="A2SBU8"/>
<dbReference type="STRING" id="420662.Mpe_A0075"/>
<dbReference type="KEGG" id="mpt:Mpe_A0075"/>
<dbReference type="eggNOG" id="COG0468">
    <property type="taxonomic scope" value="Bacteria"/>
</dbReference>
<dbReference type="HOGENOM" id="CLU_040469_3_2_4"/>
<dbReference type="Proteomes" id="UP000000366">
    <property type="component" value="Chromosome"/>
</dbReference>
<dbReference type="GO" id="GO:0005829">
    <property type="term" value="C:cytosol"/>
    <property type="evidence" value="ECO:0007669"/>
    <property type="project" value="TreeGrafter"/>
</dbReference>
<dbReference type="GO" id="GO:0005524">
    <property type="term" value="F:ATP binding"/>
    <property type="evidence" value="ECO:0007669"/>
    <property type="project" value="UniProtKB-UniRule"/>
</dbReference>
<dbReference type="GO" id="GO:0016887">
    <property type="term" value="F:ATP hydrolysis activity"/>
    <property type="evidence" value="ECO:0007669"/>
    <property type="project" value="InterPro"/>
</dbReference>
<dbReference type="GO" id="GO:0140664">
    <property type="term" value="F:ATP-dependent DNA damage sensor activity"/>
    <property type="evidence" value="ECO:0007669"/>
    <property type="project" value="InterPro"/>
</dbReference>
<dbReference type="GO" id="GO:0003684">
    <property type="term" value="F:damaged DNA binding"/>
    <property type="evidence" value="ECO:0007669"/>
    <property type="project" value="UniProtKB-UniRule"/>
</dbReference>
<dbReference type="GO" id="GO:0003697">
    <property type="term" value="F:single-stranded DNA binding"/>
    <property type="evidence" value="ECO:0007669"/>
    <property type="project" value="UniProtKB-UniRule"/>
</dbReference>
<dbReference type="GO" id="GO:0006310">
    <property type="term" value="P:DNA recombination"/>
    <property type="evidence" value="ECO:0007669"/>
    <property type="project" value="UniProtKB-UniRule"/>
</dbReference>
<dbReference type="GO" id="GO:0006281">
    <property type="term" value="P:DNA repair"/>
    <property type="evidence" value="ECO:0007669"/>
    <property type="project" value="UniProtKB-UniRule"/>
</dbReference>
<dbReference type="GO" id="GO:0009432">
    <property type="term" value="P:SOS response"/>
    <property type="evidence" value="ECO:0007669"/>
    <property type="project" value="UniProtKB-UniRule"/>
</dbReference>
<dbReference type="CDD" id="cd00983">
    <property type="entry name" value="RecA"/>
    <property type="match status" value="1"/>
</dbReference>
<dbReference type="FunFam" id="3.40.50.300:FF:000087">
    <property type="entry name" value="Recombinase RecA"/>
    <property type="match status" value="1"/>
</dbReference>
<dbReference type="Gene3D" id="3.40.50.300">
    <property type="entry name" value="P-loop containing nucleotide triphosphate hydrolases"/>
    <property type="match status" value="1"/>
</dbReference>
<dbReference type="HAMAP" id="MF_00268">
    <property type="entry name" value="RecA"/>
    <property type="match status" value="1"/>
</dbReference>
<dbReference type="InterPro" id="IPR003593">
    <property type="entry name" value="AAA+_ATPase"/>
</dbReference>
<dbReference type="InterPro" id="IPR013765">
    <property type="entry name" value="DNA_recomb/repair_RecA"/>
</dbReference>
<dbReference type="InterPro" id="IPR020584">
    <property type="entry name" value="DNA_recomb/repair_RecA_CS"/>
</dbReference>
<dbReference type="InterPro" id="IPR027417">
    <property type="entry name" value="P-loop_NTPase"/>
</dbReference>
<dbReference type="InterPro" id="IPR049261">
    <property type="entry name" value="RecA-like_C"/>
</dbReference>
<dbReference type="InterPro" id="IPR049428">
    <property type="entry name" value="RecA-like_N"/>
</dbReference>
<dbReference type="InterPro" id="IPR020588">
    <property type="entry name" value="RecA_ATP-bd"/>
</dbReference>
<dbReference type="InterPro" id="IPR023400">
    <property type="entry name" value="RecA_C_sf"/>
</dbReference>
<dbReference type="InterPro" id="IPR020587">
    <property type="entry name" value="RecA_monomer-monomer_interface"/>
</dbReference>
<dbReference type="NCBIfam" id="TIGR02012">
    <property type="entry name" value="tigrfam_recA"/>
    <property type="match status" value="1"/>
</dbReference>
<dbReference type="PANTHER" id="PTHR45900:SF1">
    <property type="entry name" value="MITOCHONDRIAL DNA REPAIR PROTEIN RECA HOMOLOG-RELATED"/>
    <property type="match status" value="1"/>
</dbReference>
<dbReference type="PANTHER" id="PTHR45900">
    <property type="entry name" value="RECA"/>
    <property type="match status" value="1"/>
</dbReference>
<dbReference type="Pfam" id="PF00154">
    <property type="entry name" value="RecA"/>
    <property type="match status" value="1"/>
</dbReference>
<dbReference type="Pfam" id="PF21096">
    <property type="entry name" value="RecA_C"/>
    <property type="match status" value="1"/>
</dbReference>
<dbReference type="PRINTS" id="PR00142">
    <property type="entry name" value="RECA"/>
</dbReference>
<dbReference type="SMART" id="SM00382">
    <property type="entry name" value="AAA"/>
    <property type="match status" value="1"/>
</dbReference>
<dbReference type="SUPFAM" id="SSF52540">
    <property type="entry name" value="P-loop containing nucleoside triphosphate hydrolases"/>
    <property type="match status" value="1"/>
</dbReference>
<dbReference type="SUPFAM" id="SSF54752">
    <property type="entry name" value="RecA protein, C-terminal domain"/>
    <property type="match status" value="1"/>
</dbReference>
<dbReference type="PROSITE" id="PS00321">
    <property type="entry name" value="RECA_1"/>
    <property type="match status" value="1"/>
</dbReference>
<dbReference type="PROSITE" id="PS50162">
    <property type="entry name" value="RECA_2"/>
    <property type="match status" value="1"/>
</dbReference>
<dbReference type="PROSITE" id="PS50163">
    <property type="entry name" value="RECA_3"/>
    <property type="match status" value="1"/>
</dbReference>
<accession>A2SBU8</accession>
<feature type="chain" id="PRO_1000059130" description="Protein RecA">
    <location>
        <begin position="1"/>
        <end position="357"/>
    </location>
</feature>
<feature type="binding site" evidence="1">
    <location>
        <begin position="73"/>
        <end position="80"/>
    </location>
    <ligand>
        <name>ATP</name>
        <dbReference type="ChEBI" id="CHEBI:30616"/>
    </ligand>
</feature>
<gene>
    <name evidence="1" type="primary">recA</name>
    <name type="ordered locus">Mpe_A0075</name>
</gene>
<sequence length="357" mass="38234">MDASVKTLNTEKAKALQAALAQIEKQFGKGTIMRLGEGEVIDDIEVVSTGSLGLDIALGVGGLPRGRVIEIYGPESSGKTTLTLQVIAEMQKLAGTCAFIDAEHALDSQYAQKLGVNLQELLISQPDTGEQALEIVDALVRSGSVDLIVVDSVAALTPKAELEGEMGDSLPGLQARLMSQALRKLTATIKKSNCMVIFINQIRMKIGVMFGSPETTTGGNALKFYASVRLDIRRIGSIKRGEEVIGNETKVKVVKNKVSPPFKTAEFDILFGEGVSREGEIIDLGVIAKVIDKSGAWYAYNGEKIGQGKDNSREFLRENPELAHEIENKIRESLGVALLPSIEIEVPKGTKQAAAGA</sequence>
<name>RECA_METPP</name>
<evidence type="ECO:0000255" key="1">
    <source>
        <dbReference type="HAMAP-Rule" id="MF_00268"/>
    </source>
</evidence>
<keyword id="KW-0067">ATP-binding</keyword>
<keyword id="KW-0963">Cytoplasm</keyword>
<keyword id="KW-0227">DNA damage</keyword>
<keyword id="KW-0233">DNA recombination</keyword>
<keyword id="KW-0234">DNA repair</keyword>
<keyword id="KW-0238">DNA-binding</keyword>
<keyword id="KW-0547">Nucleotide-binding</keyword>
<keyword id="KW-1185">Reference proteome</keyword>
<keyword id="KW-0742">SOS response</keyword>
<comment type="function">
    <text evidence="1">Can catalyze the hydrolysis of ATP in the presence of single-stranded DNA, the ATP-dependent uptake of single-stranded DNA by duplex DNA, and the ATP-dependent hybridization of homologous single-stranded DNAs. It interacts with LexA causing its activation and leading to its autocatalytic cleavage.</text>
</comment>
<comment type="subcellular location">
    <subcellularLocation>
        <location evidence="1">Cytoplasm</location>
    </subcellularLocation>
</comment>
<comment type="similarity">
    <text evidence="1">Belongs to the RecA family.</text>
</comment>
<organism>
    <name type="scientific">Methylibium petroleiphilum (strain ATCC BAA-1232 / LMG 22953 / PM1)</name>
    <dbReference type="NCBI Taxonomy" id="420662"/>
    <lineage>
        <taxon>Bacteria</taxon>
        <taxon>Pseudomonadati</taxon>
        <taxon>Pseudomonadota</taxon>
        <taxon>Betaproteobacteria</taxon>
        <taxon>Burkholderiales</taxon>
        <taxon>Sphaerotilaceae</taxon>
        <taxon>Methylibium</taxon>
    </lineage>
</organism>
<proteinExistence type="inferred from homology"/>
<reference key="1">
    <citation type="journal article" date="2007" name="J. Bacteriol.">
        <title>Whole-genome analysis of the methyl tert-butyl ether-degrading beta-proteobacterium Methylibium petroleiphilum PM1.</title>
        <authorList>
            <person name="Kane S.R."/>
            <person name="Chakicherla A.Y."/>
            <person name="Chain P.S.G."/>
            <person name="Schmidt R."/>
            <person name="Shin M.W."/>
            <person name="Legler T.C."/>
            <person name="Scow K.M."/>
            <person name="Larimer F.W."/>
            <person name="Lucas S.M."/>
            <person name="Richardson P.M."/>
            <person name="Hristova K.R."/>
        </authorList>
    </citation>
    <scope>NUCLEOTIDE SEQUENCE [LARGE SCALE GENOMIC DNA]</scope>
    <source>
        <strain>ATCC BAA-1232 / LMG 22953 / PM1</strain>
    </source>
</reference>
<protein>
    <recommendedName>
        <fullName evidence="1">Protein RecA</fullName>
    </recommendedName>
    <alternativeName>
        <fullName evidence="1">Recombinase A</fullName>
    </alternativeName>
</protein>